<organism>
    <name type="scientific">Shewanella sediminis (strain HAW-EB3)</name>
    <dbReference type="NCBI Taxonomy" id="425104"/>
    <lineage>
        <taxon>Bacteria</taxon>
        <taxon>Pseudomonadati</taxon>
        <taxon>Pseudomonadota</taxon>
        <taxon>Gammaproteobacteria</taxon>
        <taxon>Alteromonadales</taxon>
        <taxon>Shewanellaceae</taxon>
        <taxon>Shewanella</taxon>
    </lineage>
</organism>
<name>CLPX_SHESH</name>
<proteinExistence type="inferred from homology"/>
<comment type="function">
    <text evidence="1">ATP-dependent specificity component of the Clp protease. It directs the protease to specific substrates. Can perform chaperone functions in the absence of ClpP.</text>
</comment>
<comment type="subunit">
    <text evidence="1">Component of the ClpX-ClpP complex. Forms a hexameric ring that, in the presence of ATP, binds to fourteen ClpP subunits assembled into a disk-like structure with a central cavity, resembling the structure of eukaryotic proteasomes.</text>
</comment>
<comment type="similarity">
    <text evidence="1">Belongs to the ClpX chaperone family.</text>
</comment>
<reference key="1">
    <citation type="submission" date="2007-08" db="EMBL/GenBank/DDBJ databases">
        <title>Complete sequence of Shewanella sediminis HAW-EB3.</title>
        <authorList>
            <consortium name="US DOE Joint Genome Institute"/>
            <person name="Copeland A."/>
            <person name="Lucas S."/>
            <person name="Lapidus A."/>
            <person name="Barry K."/>
            <person name="Glavina del Rio T."/>
            <person name="Dalin E."/>
            <person name="Tice H."/>
            <person name="Pitluck S."/>
            <person name="Chertkov O."/>
            <person name="Brettin T."/>
            <person name="Bruce D."/>
            <person name="Detter J.C."/>
            <person name="Han C."/>
            <person name="Schmutz J."/>
            <person name="Larimer F."/>
            <person name="Land M."/>
            <person name="Hauser L."/>
            <person name="Kyrpides N."/>
            <person name="Kim E."/>
            <person name="Zhao J.-S."/>
            <person name="Richardson P."/>
        </authorList>
    </citation>
    <scope>NUCLEOTIDE SEQUENCE [LARGE SCALE GENOMIC DNA]</scope>
    <source>
        <strain>HAW-EB3</strain>
    </source>
</reference>
<dbReference type="EMBL" id="CP000821">
    <property type="protein sequence ID" value="ABV36153.1"/>
    <property type="molecule type" value="Genomic_DNA"/>
</dbReference>
<dbReference type="RefSeq" id="WP_012141889.1">
    <property type="nucleotide sequence ID" value="NC_009831.1"/>
</dbReference>
<dbReference type="SMR" id="A8FTI0"/>
<dbReference type="STRING" id="425104.Ssed_1542"/>
<dbReference type="KEGG" id="sse:Ssed_1542"/>
<dbReference type="eggNOG" id="COG1219">
    <property type="taxonomic scope" value="Bacteria"/>
</dbReference>
<dbReference type="HOGENOM" id="CLU_014218_8_2_6"/>
<dbReference type="OrthoDB" id="9804062at2"/>
<dbReference type="Proteomes" id="UP000002015">
    <property type="component" value="Chromosome"/>
</dbReference>
<dbReference type="GO" id="GO:0009376">
    <property type="term" value="C:HslUV protease complex"/>
    <property type="evidence" value="ECO:0007669"/>
    <property type="project" value="TreeGrafter"/>
</dbReference>
<dbReference type="GO" id="GO:0005524">
    <property type="term" value="F:ATP binding"/>
    <property type="evidence" value="ECO:0007669"/>
    <property type="project" value="UniProtKB-UniRule"/>
</dbReference>
<dbReference type="GO" id="GO:0016887">
    <property type="term" value="F:ATP hydrolysis activity"/>
    <property type="evidence" value="ECO:0007669"/>
    <property type="project" value="InterPro"/>
</dbReference>
<dbReference type="GO" id="GO:0140662">
    <property type="term" value="F:ATP-dependent protein folding chaperone"/>
    <property type="evidence" value="ECO:0007669"/>
    <property type="project" value="InterPro"/>
</dbReference>
<dbReference type="GO" id="GO:0046983">
    <property type="term" value="F:protein dimerization activity"/>
    <property type="evidence" value="ECO:0007669"/>
    <property type="project" value="InterPro"/>
</dbReference>
<dbReference type="GO" id="GO:0051082">
    <property type="term" value="F:unfolded protein binding"/>
    <property type="evidence" value="ECO:0007669"/>
    <property type="project" value="UniProtKB-UniRule"/>
</dbReference>
<dbReference type="GO" id="GO:0008270">
    <property type="term" value="F:zinc ion binding"/>
    <property type="evidence" value="ECO:0007669"/>
    <property type="project" value="InterPro"/>
</dbReference>
<dbReference type="GO" id="GO:0051301">
    <property type="term" value="P:cell division"/>
    <property type="evidence" value="ECO:0007669"/>
    <property type="project" value="TreeGrafter"/>
</dbReference>
<dbReference type="GO" id="GO:0051603">
    <property type="term" value="P:proteolysis involved in protein catabolic process"/>
    <property type="evidence" value="ECO:0007669"/>
    <property type="project" value="TreeGrafter"/>
</dbReference>
<dbReference type="CDD" id="cd19497">
    <property type="entry name" value="RecA-like_ClpX"/>
    <property type="match status" value="1"/>
</dbReference>
<dbReference type="FunFam" id="1.10.8.60:FF:000002">
    <property type="entry name" value="ATP-dependent Clp protease ATP-binding subunit ClpX"/>
    <property type="match status" value="1"/>
</dbReference>
<dbReference type="FunFam" id="3.40.50.300:FF:000005">
    <property type="entry name" value="ATP-dependent Clp protease ATP-binding subunit ClpX"/>
    <property type="match status" value="1"/>
</dbReference>
<dbReference type="Gene3D" id="1.10.8.60">
    <property type="match status" value="1"/>
</dbReference>
<dbReference type="Gene3D" id="6.20.220.10">
    <property type="entry name" value="ClpX chaperone, C4-type zinc finger domain"/>
    <property type="match status" value="1"/>
</dbReference>
<dbReference type="Gene3D" id="3.40.50.300">
    <property type="entry name" value="P-loop containing nucleotide triphosphate hydrolases"/>
    <property type="match status" value="1"/>
</dbReference>
<dbReference type="HAMAP" id="MF_00175">
    <property type="entry name" value="ClpX"/>
    <property type="match status" value="1"/>
</dbReference>
<dbReference type="InterPro" id="IPR003593">
    <property type="entry name" value="AAA+_ATPase"/>
</dbReference>
<dbReference type="InterPro" id="IPR050052">
    <property type="entry name" value="ATP-dep_Clp_protease_ClpX"/>
</dbReference>
<dbReference type="InterPro" id="IPR003959">
    <property type="entry name" value="ATPase_AAA_core"/>
</dbReference>
<dbReference type="InterPro" id="IPR019489">
    <property type="entry name" value="Clp_ATPase_C"/>
</dbReference>
<dbReference type="InterPro" id="IPR004487">
    <property type="entry name" value="Clp_protease_ATP-bd_su_ClpX"/>
</dbReference>
<dbReference type="InterPro" id="IPR046425">
    <property type="entry name" value="ClpX_bact"/>
</dbReference>
<dbReference type="InterPro" id="IPR027417">
    <property type="entry name" value="P-loop_NTPase"/>
</dbReference>
<dbReference type="InterPro" id="IPR010603">
    <property type="entry name" value="Znf_CppX_C4"/>
</dbReference>
<dbReference type="InterPro" id="IPR038366">
    <property type="entry name" value="Znf_CppX_C4_sf"/>
</dbReference>
<dbReference type="NCBIfam" id="TIGR00382">
    <property type="entry name" value="clpX"/>
    <property type="match status" value="1"/>
</dbReference>
<dbReference type="NCBIfam" id="NF003745">
    <property type="entry name" value="PRK05342.1"/>
    <property type="match status" value="1"/>
</dbReference>
<dbReference type="PANTHER" id="PTHR48102:SF7">
    <property type="entry name" value="ATP-DEPENDENT CLP PROTEASE ATP-BINDING SUBUNIT CLPX-LIKE, MITOCHONDRIAL"/>
    <property type="match status" value="1"/>
</dbReference>
<dbReference type="PANTHER" id="PTHR48102">
    <property type="entry name" value="ATP-DEPENDENT CLP PROTEASE ATP-BINDING SUBUNIT CLPX-LIKE, MITOCHONDRIAL-RELATED"/>
    <property type="match status" value="1"/>
</dbReference>
<dbReference type="Pfam" id="PF07724">
    <property type="entry name" value="AAA_2"/>
    <property type="match status" value="1"/>
</dbReference>
<dbReference type="Pfam" id="PF10431">
    <property type="entry name" value="ClpB_D2-small"/>
    <property type="match status" value="1"/>
</dbReference>
<dbReference type="Pfam" id="PF06689">
    <property type="entry name" value="zf-C4_ClpX"/>
    <property type="match status" value="1"/>
</dbReference>
<dbReference type="SMART" id="SM00382">
    <property type="entry name" value="AAA"/>
    <property type="match status" value="1"/>
</dbReference>
<dbReference type="SMART" id="SM01086">
    <property type="entry name" value="ClpB_D2-small"/>
    <property type="match status" value="1"/>
</dbReference>
<dbReference type="SMART" id="SM00994">
    <property type="entry name" value="zf-C4_ClpX"/>
    <property type="match status" value="1"/>
</dbReference>
<dbReference type="SUPFAM" id="SSF57716">
    <property type="entry name" value="Glucocorticoid receptor-like (DNA-binding domain)"/>
    <property type="match status" value="1"/>
</dbReference>
<dbReference type="SUPFAM" id="SSF52540">
    <property type="entry name" value="P-loop containing nucleoside triphosphate hydrolases"/>
    <property type="match status" value="1"/>
</dbReference>
<dbReference type="PROSITE" id="PS51902">
    <property type="entry name" value="CLPX_ZB"/>
    <property type="match status" value="1"/>
</dbReference>
<accession>A8FTI0</accession>
<feature type="chain" id="PRO_1000077178" description="ATP-dependent Clp protease ATP-binding subunit ClpX">
    <location>
        <begin position="1"/>
        <end position="425"/>
    </location>
</feature>
<feature type="domain" description="ClpX-type ZB" evidence="2">
    <location>
        <begin position="4"/>
        <end position="57"/>
    </location>
</feature>
<feature type="binding site" evidence="2">
    <location>
        <position position="16"/>
    </location>
    <ligand>
        <name>Zn(2+)</name>
        <dbReference type="ChEBI" id="CHEBI:29105"/>
    </ligand>
</feature>
<feature type="binding site" evidence="2">
    <location>
        <position position="19"/>
    </location>
    <ligand>
        <name>Zn(2+)</name>
        <dbReference type="ChEBI" id="CHEBI:29105"/>
    </ligand>
</feature>
<feature type="binding site" evidence="2">
    <location>
        <position position="38"/>
    </location>
    <ligand>
        <name>Zn(2+)</name>
        <dbReference type="ChEBI" id="CHEBI:29105"/>
    </ligand>
</feature>
<feature type="binding site" evidence="2">
    <location>
        <position position="41"/>
    </location>
    <ligand>
        <name>Zn(2+)</name>
        <dbReference type="ChEBI" id="CHEBI:29105"/>
    </ligand>
</feature>
<feature type="binding site" evidence="1">
    <location>
        <begin position="121"/>
        <end position="128"/>
    </location>
    <ligand>
        <name>ATP</name>
        <dbReference type="ChEBI" id="CHEBI:30616"/>
    </ligand>
</feature>
<evidence type="ECO:0000255" key="1">
    <source>
        <dbReference type="HAMAP-Rule" id="MF_00175"/>
    </source>
</evidence>
<evidence type="ECO:0000255" key="2">
    <source>
        <dbReference type="PROSITE-ProRule" id="PRU01250"/>
    </source>
</evidence>
<protein>
    <recommendedName>
        <fullName evidence="1">ATP-dependent Clp protease ATP-binding subunit ClpX</fullName>
    </recommendedName>
</protein>
<keyword id="KW-0067">ATP-binding</keyword>
<keyword id="KW-0143">Chaperone</keyword>
<keyword id="KW-0479">Metal-binding</keyword>
<keyword id="KW-0547">Nucleotide-binding</keyword>
<keyword id="KW-1185">Reference proteome</keyword>
<keyword id="KW-0862">Zinc</keyword>
<gene>
    <name evidence="1" type="primary">clpX</name>
    <name type="ordered locus">Ssed_1542</name>
</gene>
<sequence>MGDNKSNGDSGKLLYCSFCGKSQHEVRKLIAGPSVYVCDECVELCNDIIREEIKEISPKQDQDKLPTPRELRAHLDDYVIGQDKAKKVLSVAVYNHYKRLKNAGPKDGVELGKSNILLIGPTGSGKTLLAETLARFLNVPFTMADATTLTEAGYVGEDVENIIQKLLQKCDYDVEKAQRGIVYIDEIDKISRKSDNPSITRDVSGEGVQQALLKLIEGTVAAVPPQGGRKHPQQEFLQVDTSKILFVCGGAFSGLEKVIEQRSHTGTGIGFGAEVKGEDDKASISDILMQVEPEDLVKYGLIPEFIGRLPVLATLAELDDAALIQILSEPKNAITKQFAALFDMEGVELEFREDALKAIALKAQTRKTGARGLRSIVEGILLDIMYDLPSTENVAKVVIDESVVKGESTPILIYENSESQAAGAE</sequence>